<gene>
    <name type="ordered locus">VV2350</name>
</gene>
<reference key="1">
    <citation type="journal article" date="2003" name="Genome Res.">
        <title>Comparative genome analysis of Vibrio vulnificus, a marine pathogen.</title>
        <authorList>
            <person name="Chen C.-Y."/>
            <person name="Wu K.-M."/>
            <person name="Chang Y.-C."/>
            <person name="Chang C.-H."/>
            <person name="Tsai H.-C."/>
            <person name="Liao T.-L."/>
            <person name="Liu Y.-M."/>
            <person name="Chen H.-J."/>
            <person name="Shen A.B.-T."/>
            <person name="Li J.-C."/>
            <person name="Su T.-L."/>
            <person name="Shao C.-P."/>
            <person name="Lee C.-T."/>
            <person name="Hor L.-I."/>
            <person name="Tsai S.-F."/>
        </authorList>
    </citation>
    <scope>NUCLEOTIDE SEQUENCE [LARGE SCALE GENOMIC DNA]</scope>
    <source>
        <strain>YJ016</strain>
    </source>
</reference>
<comment type="similarity">
    <text evidence="1">Belongs to the UPF0229 family.</text>
</comment>
<proteinExistence type="inferred from homology"/>
<accession>Q7MJ13</accession>
<evidence type="ECO:0000255" key="1">
    <source>
        <dbReference type="HAMAP-Rule" id="MF_01232"/>
    </source>
</evidence>
<evidence type="ECO:0000256" key="2">
    <source>
        <dbReference type="SAM" id="MobiDB-lite"/>
    </source>
</evidence>
<sequence length="423" mass="48783">MAQFIDRRLNGKNKSAVNRQRFMRRYKEQIKESVADAVNRRSITNTETGEDVAIPHKDIKEPLFHQGKGGLRERVHPGNDQFITGDKIERPKGGQGGGGAGDGDASADGEGQDDFVFQISKDEYLDLLFEDLALPNLKKNQVNKITEWKKHRAGYQTAGMPSNISIVRSLQQSLARRTAMSAGKKRLLHELELELERIQNQEPAQKLEEMKLKQEIAELRKAIESVPFIDTFDLRFKNYERKPVPSSQAVMFCLMDVSGSMDQATKDIAKRFYVLLYLFLNRTYENVEVVFIRHHTQAKEVDEHEFFYSQETGGTIVSSALKLMDEIVKARYPVGEWNIYAAQASDGDNWADDSPRCKELLTNKLLPNCQYYAYIEITRRSHQTLWHEYEKLEESFDNFAMKNIRSVEDIFPVFRELFHKETA</sequence>
<name>Y2350_VIBVY</name>
<feature type="chain" id="PRO_0000068210" description="UPF0229 protein VV2350">
    <location>
        <begin position="1"/>
        <end position="423"/>
    </location>
</feature>
<feature type="region of interest" description="Disordered" evidence="2">
    <location>
        <begin position="81"/>
        <end position="111"/>
    </location>
</feature>
<feature type="compositionally biased region" description="Gly residues" evidence="2">
    <location>
        <begin position="93"/>
        <end position="102"/>
    </location>
</feature>
<organism>
    <name type="scientific">Vibrio vulnificus (strain YJ016)</name>
    <dbReference type="NCBI Taxonomy" id="196600"/>
    <lineage>
        <taxon>Bacteria</taxon>
        <taxon>Pseudomonadati</taxon>
        <taxon>Pseudomonadota</taxon>
        <taxon>Gammaproteobacteria</taxon>
        <taxon>Vibrionales</taxon>
        <taxon>Vibrionaceae</taxon>
        <taxon>Vibrio</taxon>
    </lineage>
</organism>
<dbReference type="EMBL" id="BA000037">
    <property type="protein sequence ID" value="BAC95114.1"/>
    <property type="molecule type" value="Genomic_DNA"/>
</dbReference>
<dbReference type="RefSeq" id="WP_011150828.1">
    <property type="nucleotide sequence ID" value="NC_005139.1"/>
</dbReference>
<dbReference type="SMR" id="Q7MJ13"/>
<dbReference type="STRING" id="672.VV93_v1c20600"/>
<dbReference type="KEGG" id="vvy:VV2350"/>
<dbReference type="eggNOG" id="COG2718">
    <property type="taxonomic scope" value="Bacteria"/>
</dbReference>
<dbReference type="HOGENOM" id="CLU_049702_0_0_6"/>
<dbReference type="Proteomes" id="UP000002675">
    <property type="component" value="Chromosome I"/>
</dbReference>
<dbReference type="HAMAP" id="MF_01232">
    <property type="entry name" value="UPF0229"/>
    <property type="match status" value="1"/>
</dbReference>
<dbReference type="InterPro" id="IPR006698">
    <property type="entry name" value="UPF0229"/>
</dbReference>
<dbReference type="NCBIfam" id="NF003707">
    <property type="entry name" value="PRK05325.1-2"/>
    <property type="match status" value="1"/>
</dbReference>
<dbReference type="NCBIfam" id="NF003708">
    <property type="entry name" value="PRK05325.1-3"/>
    <property type="match status" value="1"/>
</dbReference>
<dbReference type="PANTHER" id="PTHR30510">
    <property type="entry name" value="UPF0229 PROTEIN YEAH"/>
    <property type="match status" value="1"/>
</dbReference>
<dbReference type="PANTHER" id="PTHR30510:SF2">
    <property type="entry name" value="UPF0229 PROTEIN YEAH"/>
    <property type="match status" value="1"/>
</dbReference>
<dbReference type="Pfam" id="PF04285">
    <property type="entry name" value="DUF444"/>
    <property type="match status" value="1"/>
</dbReference>
<protein>
    <recommendedName>
        <fullName evidence="1">UPF0229 protein VV2350</fullName>
    </recommendedName>
</protein>